<reference key="1">
    <citation type="journal article" date="2000" name="DNA Res.">
        <title>Genomic characterization of the human heterotrimeric G protein alpha, beta, and gamma subunit genes.</title>
        <authorList>
            <person name="Hurowitz E.H."/>
            <person name="Melnyk J.M."/>
            <person name="Chen Y.J."/>
            <person name="Kouros-Mehr H."/>
            <person name="Simon M.I."/>
            <person name="Shizuya H."/>
        </authorList>
    </citation>
    <scope>NUCLEOTIDE SEQUENCE [GENOMIC DNA]</scope>
</reference>
<reference key="2">
    <citation type="submission" date="2002-03" db="EMBL/GenBank/DDBJ databases">
        <title>cDNA clones of human proteins involved in signal transduction sequenced by the Guthrie cDNA resource center (www.cdna.org).</title>
        <authorList>
            <person name="Puhl H.L. III"/>
            <person name="Ikeda S.R."/>
            <person name="Aronstam R.S."/>
        </authorList>
    </citation>
    <scope>NUCLEOTIDE SEQUENCE [LARGE SCALE MRNA]</scope>
</reference>
<reference key="3">
    <citation type="journal article" date="2004" name="Genome Res.">
        <title>The status, quality, and expansion of the NIH full-length cDNA project: the Mammalian Gene Collection (MGC).</title>
        <authorList>
            <consortium name="The MGC Project Team"/>
        </authorList>
    </citation>
    <scope>NUCLEOTIDE SEQUENCE [LARGE SCALE MRNA]</scope>
</reference>
<organism>
    <name type="scientific">Homo sapiens</name>
    <name type="common">Human</name>
    <dbReference type="NCBI Taxonomy" id="9606"/>
    <lineage>
        <taxon>Eukaryota</taxon>
        <taxon>Metazoa</taxon>
        <taxon>Chordata</taxon>
        <taxon>Craniata</taxon>
        <taxon>Vertebrata</taxon>
        <taxon>Euteleostomi</taxon>
        <taxon>Mammalia</taxon>
        <taxon>Eutheria</taxon>
        <taxon>Euarchontoglires</taxon>
        <taxon>Primates</taxon>
        <taxon>Haplorrhini</taxon>
        <taxon>Catarrhini</taxon>
        <taxon>Hominidae</taxon>
        <taxon>Homo</taxon>
    </lineage>
</organism>
<feature type="chain" id="PRO_0000012649" description="Guanine nucleotide-binding protein G(I)/G(S)/G(O) subunit gamma-8">
    <location>
        <begin position="1"/>
        <end position="67"/>
    </location>
</feature>
<feature type="propeptide" id="PRO_0000012650" description="Removed in mature form" evidence="1">
    <location>
        <begin position="68"/>
        <end position="70"/>
    </location>
</feature>
<feature type="modified residue" description="Cysteine methyl ester" evidence="1">
    <location>
        <position position="67"/>
    </location>
</feature>
<feature type="lipid moiety-binding region" description="S-geranylgeranyl cysteine" evidence="1">
    <location>
        <position position="67"/>
    </location>
</feature>
<name>GBG8_HUMAN</name>
<keyword id="KW-1003">Cell membrane</keyword>
<keyword id="KW-0449">Lipoprotein</keyword>
<keyword id="KW-0472">Membrane</keyword>
<keyword id="KW-0488">Methylation</keyword>
<keyword id="KW-0636">Prenylation</keyword>
<keyword id="KW-1267">Proteomics identification</keyword>
<keyword id="KW-1185">Reference proteome</keyword>
<keyword id="KW-0807">Transducer</keyword>
<proteinExistence type="evidence at protein level"/>
<protein>
    <recommendedName>
        <fullName>Guanine nucleotide-binding protein G(I)/G(S)/G(O) subunit gamma-8</fullName>
    </recommendedName>
    <alternativeName>
        <fullName>Gamma-9</fullName>
    </alternativeName>
</protein>
<sequence>MSNNMAKIAEARKTVEQLKLEVNIDRMKVSQAAAELLAFCETHAKDDPLVTPVPAAENPFRDKRLFCVLL</sequence>
<accession>Q9UK08</accession>
<accession>Q4VBM5</accession>
<dbReference type="EMBL" id="AF188179">
    <property type="protein sequence ID" value="AAF04569.1"/>
    <property type="molecule type" value="Genomic_DNA"/>
</dbReference>
<dbReference type="EMBL" id="AF493875">
    <property type="protein sequence ID" value="AAM12589.1"/>
    <property type="molecule type" value="mRNA"/>
</dbReference>
<dbReference type="EMBL" id="BC095514">
    <property type="protein sequence ID" value="AAH95514.1"/>
    <property type="molecule type" value="mRNA"/>
</dbReference>
<dbReference type="CCDS" id="CCDS12687.1"/>
<dbReference type="RefSeq" id="NP_150283.1">
    <property type="nucleotide sequence ID" value="NM_033258.2"/>
</dbReference>
<dbReference type="RefSeq" id="XP_016882992.1">
    <property type="nucleotide sequence ID" value="XM_017027503.1"/>
</dbReference>
<dbReference type="RefSeq" id="XP_016882993.1">
    <property type="nucleotide sequence ID" value="XM_017027504.3"/>
</dbReference>
<dbReference type="RefSeq" id="XP_016882994.1">
    <property type="nucleotide sequence ID" value="XM_017027505.1"/>
</dbReference>
<dbReference type="RefSeq" id="XP_047295681.1">
    <property type="nucleotide sequence ID" value="XM_047439725.1"/>
</dbReference>
<dbReference type="RefSeq" id="XP_054178661.1">
    <property type="nucleotide sequence ID" value="XM_054322686.1"/>
</dbReference>
<dbReference type="RefSeq" id="XP_054178662.1">
    <property type="nucleotide sequence ID" value="XM_054322687.1"/>
</dbReference>
<dbReference type="RefSeq" id="XP_054178663.1">
    <property type="nucleotide sequence ID" value="XM_054322688.1"/>
</dbReference>
<dbReference type="SMR" id="Q9UK08"/>
<dbReference type="BioGRID" id="125148">
    <property type="interactions" value="132"/>
</dbReference>
<dbReference type="CORUM" id="Q9UK08"/>
<dbReference type="FunCoup" id="Q9UK08">
    <property type="interactions" value="1540"/>
</dbReference>
<dbReference type="IntAct" id="Q9UK08">
    <property type="interactions" value="122"/>
</dbReference>
<dbReference type="STRING" id="9606.ENSP00000300873"/>
<dbReference type="BioMuta" id="GNG8"/>
<dbReference type="DMDM" id="12232629"/>
<dbReference type="MassIVE" id="Q9UK08"/>
<dbReference type="PaxDb" id="9606-ENSP00000300873"/>
<dbReference type="PeptideAtlas" id="Q9UK08"/>
<dbReference type="ProteomicsDB" id="84700"/>
<dbReference type="TopDownProteomics" id="Q9UK08"/>
<dbReference type="Antibodypedia" id="31465">
    <property type="antibodies" value="51 antibodies from 14 providers"/>
</dbReference>
<dbReference type="DNASU" id="94235"/>
<dbReference type="Ensembl" id="ENST00000300873.5">
    <property type="protein sequence ID" value="ENSP00000300873.3"/>
    <property type="gene ID" value="ENSG00000167414.5"/>
</dbReference>
<dbReference type="Ensembl" id="ENST00000693335.1">
    <property type="protein sequence ID" value="ENSP00000508424.1"/>
    <property type="gene ID" value="ENSG00000167414.5"/>
</dbReference>
<dbReference type="GeneID" id="94235"/>
<dbReference type="KEGG" id="hsa:94235"/>
<dbReference type="MANE-Select" id="ENST00000693335.1">
    <property type="protein sequence ID" value="ENSP00000508424.1"/>
    <property type="RefSeq nucleotide sequence ID" value="NM_033258.2"/>
    <property type="RefSeq protein sequence ID" value="NP_150283.1"/>
</dbReference>
<dbReference type="UCSC" id="uc010xyd.3">
    <property type="organism name" value="human"/>
</dbReference>
<dbReference type="AGR" id="HGNC:19664"/>
<dbReference type="CTD" id="94235"/>
<dbReference type="DisGeNET" id="94235"/>
<dbReference type="GeneCards" id="GNG8"/>
<dbReference type="HGNC" id="HGNC:19664">
    <property type="gene designation" value="GNG8"/>
</dbReference>
<dbReference type="HPA" id="ENSG00000167414">
    <property type="expression patterns" value="Tissue enhanced (adrenal gland, brain)"/>
</dbReference>
<dbReference type="neXtProt" id="NX_Q9UK08"/>
<dbReference type="OpenTargets" id="ENSG00000167414"/>
<dbReference type="PharmGKB" id="PA134921496"/>
<dbReference type="VEuPathDB" id="HostDB:ENSG00000167414"/>
<dbReference type="eggNOG" id="KOG4119">
    <property type="taxonomic scope" value="Eukaryota"/>
</dbReference>
<dbReference type="GeneTree" id="ENSGT01100000263497"/>
<dbReference type="HOGENOM" id="CLU_168377_0_1_1"/>
<dbReference type="InParanoid" id="Q9UK08"/>
<dbReference type="OMA" id="NIERMMI"/>
<dbReference type="OrthoDB" id="6264244at2759"/>
<dbReference type="PAN-GO" id="Q9UK08">
    <property type="GO annotations" value="3 GO annotations based on evolutionary models"/>
</dbReference>
<dbReference type="PhylomeDB" id="Q9UK08"/>
<dbReference type="TreeFam" id="TF319909"/>
<dbReference type="PathwayCommons" id="Q9UK08"/>
<dbReference type="Reactome" id="R-HSA-1296041">
    <property type="pathway name" value="Activation of G protein gated Potassium channels"/>
</dbReference>
<dbReference type="Reactome" id="R-HSA-163359">
    <property type="pathway name" value="Glucagon signaling in metabolic regulation"/>
</dbReference>
<dbReference type="Reactome" id="R-HSA-202040">
    <property type="pathway name" value="G-protein activation"/>
</dbReference>
<dbReference type="Reactome" id="R-HSA-381676">
    <property type="pathway name" value="Glucagon-like Peptide-1 (GLP1) regulates insulin secretion"/>
</dbReference>
<dbReference type="Reactome" id="R-HSA-392170">
    <property type="pathway name" value="ADP signalling through P2Y purinoceptor 12"/>
</dbReference>
<dbReference type="Reactome" id="R-HSA-392451">
    <property type="pathway name" value="G beta:gamma signalling through PI3Kgamma"/>
</dbReference>
<dbReference type="Reactome" id="R-HSA-392851">
    <property type="pathway name" value="Prostacyclin signalling through prostacyclin receptor"/>
</dbReference>
<dbReference type="Reactome" id="R-HSA-400042">
    <property type="pathway name" value="Adrenaline,noradrenaline inhibits insulin secretion"/>
</dbReference>
<dbReference type="Reactome" id="R-HSA-4086398">
    <property type="pathway name" value="Ca2+ pathway"/>
</dbReference>
<dbReference type="Reactome" id="R-HSA-416476">
    <property type="pathway name" value="G alpha (q) signalling events"/>
</dbReference>
<dbReference type="Reactome" id="R-HSA-416482">
    <property type="pathway name" value="G alpha (12/13) signalling events"/>
</dbReference>
<dbReference type="Reactome" id="R-HSA-418217">
    <property type="pathway name" value="G beta:gamma signalling through PLC beta"/>
</dbReference>
<dbReference type="Reactome" id="R-HSA-418555">
    <property type="pathway name" value="G alpha (s) signalling events"/>
</dbReference>
<dbReference type="Reactome" id="R-HSA-418592">
    <property type="pathway name" value="ADP signalling through P2Y purinoceptor 1"/>
</dbReference>
<dbReference type="Reactome" id="R-HSA-418594">
    <property type="pathway name" value="G alpha (i) signalling events"/>
</dbReference>
<dbReference type="Reactome" id="R-HSA-418597">
    <property type="pathway name" value="G alpha (z) signalling events"/>
</dbReference>
<dbReference type="Reactome" id="R-HSA-420092">
    <property type="pathway name" value="Glucagon-type ligand receptors"/>
</dbReference>
<dbReference type="Reactome" id="R-HSA-428930">
    <property type="pathway name" value="Thromboxane signalling through TP receptor"/>
</dbReference>
<dbReference type="Reactome" id="R-HSA-432040">
    <property type="pathway name" value="Vasopressin regulates renal water homeostasis via Aquaporins"/>
</dbReference>
<dbReference type="Reactome" id="R-HSA-456926">
    <property type="pathway name" value="Thrombin signalling through proteinase activated receptors (PARs)"/>
</dbReference>
<dbReference type="Reactome" id="R-HSA-500657">
    <property type="pathway name" value="Presynaptic function of Kainate receptors"/>
</dbReference>
<dbReference type="Reactome" id="R-HSA-6814122">
    <property type="pathway name" value="Cooperation of PDCL (PhLP1) and TRiC/CCT in G-protein beta folding"/>
</dbReference>
<dbReference type="Reactome" id="R-HSA-8964315">
    <property type="pathway name" value="G beta:gamma signalling through BTK"/>
</dbReference>
<dbReference type="Reactome" id="R-HSA-8964616">
    <property type="pathway name" value="G beta:gamma signalling through CDC42"/>
</dbReference>
<dbReference type="Reactome" id="R-HSA-9009391">
    <property type="pathway name" value="Extra-nuclear estrogen signaling"/>
</dbReference>
<dbReference type="Reactome" id="R-HSA-9634597">
    <property type="pathway name" value="GPER1 signaling"/>
</dbReference>
<dbReference type="Reactome" id="R-HSA-9660821">
    <property type="pathway name" value="ADORA2B mediated anti-inflammatory cytokines production"/>
</dbReference>
<dbReference type="Reactome" id="R-HSA-9856530">
    <property type="pathway name" value="High laminar flow shear stress activates signaling by PIEZO1 and PECAM1:CDH5:KDR in endothelial cells"/>
</dbReference>
<dbReference type="Reactome" id="R-HSA-997272">
    <property type="pathway name" value="Inhibition of voltage gated Ca2+ channels via Gbeta/gamma subunits"/>
</dbReference>
<dbReference type="SignaLink" id="Q9UK08"/>
<dbReference type="BioGRID-ORCS" id="94235">
    <property type="hits" value="12 hits in 1142 CRISPR screens"/>
</dbReference>
<dbReference type="GenomeRNAi" id="94235"/>
<dbReference type="Pharos" id="Q9UK08">
    <property type="development level" value="Tdark"/>
</dbReference>
<dbReference type="PRO" id="PR:Q9UK08"/>
<dbReference type="Proteomes" id="UP000005640">
    <property type="component" value="Chromosome 19"/>
</dbReference>
<dbReference type="RNAct" id="Q9UK08">
    <property type="molecule type" value="protein"/>
</dbReference>
<dbReference type="Bgee" id="ENSG00000167414">
    <property type="expression patterns" value="Expressed in apex of heart and 95 other cell types or tissues"/>
</dbReference>
<dbReference type="GO" id="GO:0005834">
    <property type="term" value="C:heterotrimeric G-protein complex"/>
    <property type="evidence" value="ECO:0000318"/>
    <property type="project" value="GO_Central"/>
</dbReference>
<dbReference type="GO" id="GO:0005886">
    <property type="term" value="C:plasma membrane"/>
    <property type="evidence" value="ECO:0000304"/>
    <property type="project" value="Reactome"/>
</dbReference>
<dbReference type="GO" id="GO:0031681">
    <property type="term" value="F:G-protein beta-subunit binding"/>
    <property type="evidence" value="ECO:0000318"/>
    <property type="project" value="GO_Central"/>
</dbReference>
<dbReference type="GO" id="GO:0003924">
    <property type="term" value="F:GTPase activity"/>
    <property type="evidence" value="ECO:0000303"/>
    <property type="project" value="UniProtKB"/>
</dbReference>
<dbReference type="GO" id="GO:0071444">
    <property type="term" value="P:cellular response to pheromone"/>
    <property type="evidence" value="ECO:0007669"/>
    <property type="project" value="Ensembl"/>
</dbReference>
<dbReference type="GO" id="GO:0007186">
    <property type="term" value="P:G protein-coupled receptor signaling pathway"/>
    <property type="evidence" value="ECO:0000318"/>
    <property type="project" value="GO_Central"/>
</dbReference>
<dbReference type="GO" id="GO:0007399">
    <property type="term" value="P:nervous system development"/>
    <property type="evidence" value="ECO:0007669"/>
    <property type="project" value="Ensembl"/>
</dbReference>
<dbReference type="GO" id="GO:0043584">
    <property type="term" value="P:nose development"/>
    <property type="evidence" value="ECO:0007669"/>
    <property type="project" value="Ensembl"/>
</dbReference>
<dbReference type="GO" id="GO:0035176">
    <property type="term" value="P:social behavior"/>
    <property type="evidence" value="ECO:0007669"/>
    <property type="project" value="Ensembl"/>
</dbReference>
<dbReference type="CDD" id="cd00068">
    <property type="entry name" value="GGL"/>
    <property type="match status" value="1"/>
</dbReference>
<dbReference type="FunFam" id="4.10.260.10:FF:000001">
    <property type="entry name" value="Guanine nucleotide-binding protein subunit gamma"/>
    <property type="match status" value="1"/>
</dbReference>
<dbReference type="Gene3D" id="4.10.260.10">
    <property type="entry name" value="Transducin (heterotrimeric G protein), gamma chain"/>
    <property type="match status" value="1"/>
</dbReference>
<dbReference type="InterPro" id="IPR015898">
    <property type="entry name" value="G-protein_gamma-like_dom"/>
</dbReference>
<dbReference type="InterPro" id="IPR036284">
    <property type="entry name" value="GGL_sf"/>
</dbReference>
<dbReference type="InterPro" id="IPR001770">
    <property type="entry name" value="Gprotein-gamma"/>
</dbReference>
<dbReference type="PANTHER" id="PTHR13809">
    <property type="entry name" value="GUANINE NUCLEOTIDE-BINDING PROTEIN GAMMA SUBUNIT"/>
    <property type="match status" value="1"/>
</dbReference>
<dbReference type="Pfam" id="PF00631">
    <property type="entry name" value="G-gamma"/>
    <property type="match status" value="1"/>
</dbReference>
<dbReference type="PRINTS" id="PR00321">
    <property type="entry name" value="GPROTEING"/>
</dbReference>
<dbReference type="SMART" id="SM01224">
    <property type="entry name" value="G_gamma"/>
    <property type="match status" value="1"/>
</dbReference>
<dbReference type="SMART" id="SM00224">
    <property type="entry name" value="GGL"/>
    <property type="match status" value="1"/>
</dbReference>
<dbReference type="SUPFAM" id="SSF48670">
    <property type="entry name" value="Transducin (heterotrimeric G protein), gamma chain"/>
    <property type="match status" value="1"/>
</dbReference>
<dbReference type="PROSITE" id="PS50058">
    <property type="entry name" value="G_PROTEIN_GAMMA"/>
    <property type="match status" value="1"/>
</dbReference>
<gene>
    <name type="primary">GNG8</name>
    <name type="synonym">GNG9</name>
    <name type="synonym">GNGT9</name>
</gene>
<evidence type="ECO:0000250" key="1"/>
<evidence type="ECO:0000305" key="2"/>
<comment type="function">
    <text>Guanine nucleotide-binding proteins (G proteins) are involved as a modulator or transducer in various transmembrane signaling systems. The beta and gamma chains are required for the GTPase activity, for replacement of GDP by GTP, and for G protein-effector interaction.</text>
</comment>
<comment type="subunit">
    <text>G proteins are composed of 3 units, alpha, beta and gamma.</text>
</comment>
<comment type="interaction">
    <interactant intactId="EBI-9074207">
        <id>Q9UK08</id>
    </interactant>
    <interactant intactId="EBI-2835269">
        <id>P32302</id>
        <label>CXCR5</label>
    </interactant>
    <organismsDiffer>false</organismsDiffer>
    <experiments>3</experiments>
</comment>
<comment type="subcellular location">
    <subcellularLocation>
        <location evidence="2">Cell membrane</location>
        <topology evidence="2">Lipid-anchor</topology>
        <orientation evidence="2">Cytoplasmic side</orientation>
    </subcellularLocation>
</comment>
<comment type="similarity">
    <text evidence="2">Belongs to the G protein gamma family.</text>
</comment>